<feature type="chain" id="PRO_0000150067" description="CoB--CoM heterodisulfide reductase subunit B">
    <location>
        <begin position="1"/>
        <end position="305"/>
    </location>
</feature>
<dbReference type="EC" id="1.8.98.-" evidence="2"/>
<dbReference type="EMBL" id="AE009439">
    <property type="protein sequence ID" value="AAM01787.1"/>
    <property type="molecule type" value="Genomic_DNA"/>
</dbReference>
<dbReference type="RefSeq" id="WP_011018942.1">
    <property type="nucleotide sequence ID" value="NC_003551.1"/>
</dbReference>
<dbReference type="SMR" id="Q8TXT8"/>
<dbReference type="FunCoup" id="Q8TXT8">
    <property type="interactions" value="63"/>
</dbReference>
<dbReference type="STRING" id="190192.MK0572"/>
<dbReference type="PaxDb" id="190192-MK0572"/>
<dbReference type="EnsemblBacteria" id="AAM01787">
    <property type="protein sequence ID" value="AAM01787"/>
    <property type="gene ID" value="MK0572"/>
</dbReference>
<dbReference type="GeneID" id="1476673"/>
<dbReference type="KEGG" id="mka:MK0572"/>
<dbReference type="PATRIC" id="fig|190192.8.peg.607"/>
<dbReference type="HOGENOM" id="CLU_052147_1_0_2"/>
<dbReference type="InParanoid" id="Q8TXT8"/>
<dbReference type="OrthoDB" id="144689at2157"/>
<dbReference type="UniPathway" id="UPA00647">
    <property type="reaction ID" value="UER00700"/>
</dbReference>
<dbReference type="Proteomes" id="UP000001826">
    <property type="component" value="Chromosome"/>
</dbReference>
<dbReference type="GO" id="GO:0051912">
    <property type="term" value="F:CoB--CoM heterodisulfide reductase activity"/>
    <property type="evidence" value="ECO:0007669"/>
    <property type="project" value="InterPro"/>
</dbReference>
<dbReference type="GO" id="GO:0015948">
    <property type="term" value="P:methanogenesis"/>
    <property type="evidence" value="ECO:0007669"/>
    <property type="project" value="UniProtKB-KW"/>
</dbReference>
<dbReference type="Gene3D" id="1.20.1050.140">
    <property type="match status" value="1"/>
</dbReference>
<dbReference type="InterPro" id="IPR017678">
    <property type="entry name" value="CoB/CoM_hetero-S_Rdtase_bsu"/>
</dbReference>
<dbReference type="InterPro" id="IPR004017">
    <property type="entry name" value="Cys_rich_dom"/>
</dbReference>
<dbReference type="InterPro" id="IPR051278">
    <property type="entry name" value="HdrB/HdrD_reductase"/>
</dbReference>
<dbReference type="NCBIfam" id="TIGR03288">
    <property type="entry name" value="CoB_CoM_SS_B"/>
    <property type="match status" value="1"/>
</dbReference>
<dbReference type="PANTHER" id="PTHR42947">
    <property type="entry name" value="COB--COM HETERODISULFIDE REDUCTASE SUBUNIT B 1"/>
    <property type="match status" value="1"/>
</dbReference>
<dbReference type="PANTHER" id="PTHR42947:SF1">
    <property type="entry name" value="COB--COM HETERODISULFIDE REDUCTASE SUBUNIT B 1"/>
    <property type="match status" value="1"/>
</dbReference>
<dbReference type="Pfam" id="PF02754">
    <property type="entry name" value="CCG"/>
    <property type="match status" value="2"/>
</dbReference>
<gene>
    <name type="primary">hdrB</name>
    <name type="ordered locus">MK0572</name>
</gene>
<comment type="function">
    <text evidence="1">Part of a complex that catalyzes the reversible reduction of CoM-S-S-CoB to the thiol-coenzymes H-S-CoM (coenzyme M) and H-S-CoB (coenzyme B).</text>
</comment>
<comment type="pathway">
    <text evidence="1">Cofactor metabolism; coenzyme M-coenzyme B heterodisulfide reduction; coenzyme B and coenzyme M from coenzyme M-coenzyme B heterodisulfide: step 1/1.</text>
</comment>
<comment type="subunit">
    <text evidence="1">The heterodisulfide reductase is composed of three subunits; HdrA, HdrB and HdrC.</text>
</comment>
<comment type="similarity">
    <text evidence="2">Belongs to the HdrB family.</text>
</comment>
<name>HDRB_METKA</name>
<proteinExistence type="inferred from homology"/>
<organism>
    <name type="scientific">Methanopyrus kandleri (strain AV19 / DSM 6324 / JCM 9639 / NBRC 100938)</name>
    <dbReference type="NCBI Taxonomy" id="190192"/>
    <lineage>
        <taxon>Archaea</taxon>
        <taxon>Methanobacteriati</taxon>
        <taxon>Methanobacteriota</taxon>
        <taxon>Methanomada group</taxon>
        <taxon>Methanopyri</taxon>
        <taxon>Methanopyrales</taxon>
        <taxon>Methanopyraceae</taxon>
        <taxon>Methanopyrus</taxon>
    </lineage>
</organism>
<accession>Q8TXT8</accession>
<reference key="1">
    <citation type="journal article" date="2002" name="Proc. Natl. Acad. Sci. U.S.A.">
        <title>The complete genome of hyperthermophile Methanopyrus kandleri AV19 and monophyly of archaeal methanogens.</title>
        <authorList>
            <person name="Slesarev A.I."/>
            <person name="Mezhevaya K.V."/>
            <person name="Makarova K.S."/>
            <person name="Polushin N.N."/>
            <person name="Shcherbinina O.V."/>
            <person name="Shakhova V.V."/>
            <person name="Belova G.I."/>
            <person name="Aravind L."/>
            <person name="Natale D.A."/>
            <person name="Rogozin I.B."/>
            <person name="Tatusov R.L."/>
            <person name="Wolf Y.I."/>
            <person name="Stetter K.O."/>
            <person name="Malykh A.G."/>
            <person name="Koonin E.V."/>
            <person name="Kozyavkin S.A."/>
        </authorList>
    </citation>
    <scope>NUCLEOTIDE SEQUENCE [LARGE SCALE GENOMIC DNA]</scope>
    <source>
        <strain>AV19 / DSM 6324 / JCM 9639 / NBRC 100938</strain>
    </source>
</reference>
<keyword id="KW-0484">Methanogenesis</keyword>
<keyword id="KW-0560">Oxidoreductase</keyword>
<keyword id="KW-1185">Reference proteome</keyword>
<sequence length="305" mass="34131">MAKKLCFFLGCIMPNRYPGIEKATRLVFEELGYELVDMDGASCCPAPGVFGSFDLKTWVTIAARNLSIAEEKGYDILTVCNGCFGSLNEANHLLQENPELREFVNEKLAEIDREYKGKVKVYHVNTFLYEEVGVKKIKEKVERPLEKTDGEPLKVAVHYGCHLLKPSEVTGFPGSVEDPRTLDELVEALGAESVDYKDKIMCCGAGGGVRSRELKVSLHFTREKIFNMLEAGADCTTNVCPFCHLQFDRGQIEMKEHFEKLPPKKLPVFHYCQLAGLAFGMDPEELALETHEIDCTPVLEKLGLA</sequence>
<evidence type="ECO:0000250" key="1">
    <source>
        <dbReference type="UniProtKB" id="Q6LY38"/>
    </source>
</evidence>
<evidence type="ECO:0000305" key="2"/>
<protein>
    <recommendedName>
        <fullName evidence="2">CoB--CoM heterodisulfide reductase subunit B</fullName>
        <ecNumber evidence="2">1.8.98.-</ecNumber>
    </recommendedName>
</protein>